<dbReference type="EMBL" id="AF035574">
    <property type="protein sequence ID" value="AAC35746.1"/>
    <property type="molecule type" value="Genomic_DNA"/>
</dbReference>
<dbReference type="EMBL" id="AE000511">
    <property type="status" value="NOT_ANNOTATED_CDS"/>
    <property type="molecule type" value="Genomic_DNA"/>
</dbReference>
<dbReference type="PaxDb" id="85962-C694_04865"/>
<dbReference type="eggNOG" id="ENOG503328N">
    <property type="taxonomic scope" value="Bacteria"/>
</dbReference>
<dbReference type="InParanoid" id="O87326"/>
<dbReference type="PhylomeDB" id="O87326"/>
<dbReference type="Proteomes" id="UP000000429">
    <property type="component" value="Chromosome"/>
</dbReference>
<dbReference type="InterPro" id="IPR025113">
    <property type="entry name" value="TRL-like"/>
</dbReference>
<dbReference type="Pfam" id="PF13146">
    <property type="entry name" value="TRL"/>
    <property type="match status" value="1"/>
</dbReference>
<name>TRL_HELPY</name>
<gene>
    <name type="primary">trl</name>
    <name type="ordered locus">HP_0945.1</name>
</gene>
<feature type="chain" id="PRO_0000065633" description="Protein trl">
    <location>
        <begin position="1"/>
        <end position="86"/>
    </location>
</feature>
<feature type="sequence variant" description="In strain: MI 212.">
    <original>T</original>
    <variation>A</variation>
    <location>
        <position position="12"/>
    </location>
</feature>
<feature type="sequence variant" description="In strain: MI 212.">
    <original>A</original>
    <variation>V</variation>
    <location>
        <position position="26"/>
    </location>
</feature>
<sequence length="86" mass="8871">MSGCASSSPTGTLITMVTMPVSGNDAQYSKEGRASCWSVFSLVAAGNCSVEKAAKSGGVTKIKMVSRETNNFLGIVGKYTTIVQGD</sequence>
<organism>
    <name type="scientific">Helicobacter pylori (strain ATCC 700392 / 26695)</name>
    <name type="common">Campylobacter pylori</name>
    <dbReference type="NCBI Taxonomy" id="85962"/>
    <lineage>
        <taxon>Bacteria</taxon>
        <taxon>Pseudomonadati</taxon>
        <taxon>Campylobacterota</taxon>
        <taxon>Epsilonproteobacteria</taxon>
        <taxon>Campylobacterales</taxon>
        <taxon>Helicobacteraceae</taxon>
        <taxon>Helicobacter</taxon>
    </lineage>
</organism>
<proteinExistence type="predicted"/>
<accession>O87326</accession>
<protein>
    <recommendedName>
        <fullName>Protein trl</fullName>
    </recommendedName>
    <alternativeName>
        <fullName>tRNA-associated locus protein</fullName>
    </alternativeName>
</protein>
<reference key="1">
    <citation type="journal article" date="1999" name="Microbiology">
        <title>A novel tRNA-associated locus (trl) from Helicobacter pylori is co-transcribed with tRNA(Gly) and reveals genetic diversity.</title>
        <authorList>
            <person name="Dundon W.G."/>
            <person name="Marshall D.G."/>
            <person name="Morain C.A."/>
            <person name="Smyth C.J."/>
        </authorList>
    </citation>
    <scope>NUCLEOTIDE SEQUENCE [GENOMIC DNA]</scope>
    <source>
        <strain>MI 212</strain>
    </source>
</reference>
<reference key="2">
    <citation type="journal article" date="1997" name="Nature">
        <title>The complete genome sequence of the gastric pathogen Helicobacter pylori.</title>
        <authorList>
            <person name="Tomb J.-F."/>
            <person name="White O."/>
            <person name="Kerlavage A.R."/>
            <person name="Clayton R.A."/>
            <person name="Sutton G.G."/>
            <person name="Fleischmann R.D."/>
            <person name="Ketchum K.A."/>
            <person name="Klenk H.-P."/>
            <person name="Gill S.R."/>
            <person name="Dougherty B.A."/>
            <person name="Nelson K.E."/>
            <person name="Quackenbush J."/>
            <person name="Zhou L."/>
            <person name="Kirkness E.F."/>
            <person name="Peterson S.N."/>
            <person name="Loftus B.J."/>
            <person name="Richardson D.L."/>
            <person name="Dodson R.J."/>
            <person name="Khalak H.G."/>
            <person name="Glodek A."/>
            <person name="McKenney K."/>
            <person name="FitzGerald L.M."/>
            <person name="Lee N."/>
            <person name="Adams M.D."/>
            <person name="Hickey E.K."/>
            <person name="Berg D.E."/>
            <person name="Gocayne J.D."/>
            <person name="Utterback T.R."/>
            <person name="Peterson J.D."/>
            <person name="Kelley J.M."/>
            <person name="Cotton M.D."/>
            <person name="Weidman J.F."/>
            <person name="Fujii C."/>
            <person name="Bowman C."/>
            <person name="Watthey L."/>
            <person name="Wallin E."/>
            <person name="Hayes W.S."/>
            <person name="Borodovsky M."/>
            <person name="Karp P.D."/>
            <person name="Smith H.O."/>
            <person name="Fraser C.M."/>
            <person name="Venter J.C."/>
        </authorList>
    </citation>
    <scope>NUCLEOTIDE SEQUENCE [LARGE SCALE GENOMIC DNA]</scope>
    <source>
        <strain>ATCC 700392 / 26695</strain>
    </source>
</reference>
<keyword id="KW-1185">Reference proteome</keyword>